<reference key="1">
    <citation type="journal article" date="2004" name="Proc. Natl. Acad. Sci. U.S.A.">
        <title>Genome sequence of the deep-sea gamma-proteobacterium Idiomarina loihiensis reveals amino acid fermentation as a source of carbon and energy.</title>
        <authorList>
            <person name="Hou S."/>
            <person name="Saw J.H."/>
            <person name="Lee K.S."/>
            <person name="Freitas T.A."/>
            <person name="Belisle C."/>
            <person name="Kawarabayasi Y."/>
            <person name="Donachie S.P."/>
            <person name="Pikina A."/>
            <person name="Galperin M.Y."/>
            <person name="Koonin E.V."/>
            <person name="Makarova K.S."/>
            <person name="Omelchenko M.V."/>
            <person name="Sorokin A."/>
            <person name="Wolf Y.I."/>
            <person name="Li Q.X."/>
            <person name="Keum Y.S."/>
            <person name="Campbell S."/>
            <person name="Denery J."/>
            <person name="Aizawa S."/>
            <person name="Shibata S."/>
            <person name="Malahoff A."/>
            <person name="Alam M."/>
        </authorList>
    </citation>
    <scope>NUCLEOTIDE SEQUENCE [LARGE SCALE GENOMIC DNA]</scope>
    <source>
        <strain>ATCC BAA-735 / DSM 15497 / L2-TR</strain>
    </source>
</reference>
<protein>
    <recommendedName>
        <fullName evidence="1">1-deoxy-D-xylulose-5-phosphate synthase</fullName>
        <ecNumber evidence="1">2.2.1.7</ecNumber>
    </recommendedName>
    <alternativeName>
        <fullName evidence="1">1-deoxyxylulose-5-phosphate synthase</fullName>
        <shortName evidence="1">DXP synthase</shortName>
        <shortName evidence="1">DXPS</shortName>
    </alternativeName>
</protein>
<dbReference type="EC" id="2.2.1.7" evidence="1"/>
<dbReference type="EMBL" id="AE017340">
    <property type="protein sequence ID" value="AAV82970.1"/>
    <property type="molecule type" value="Genomic_DNA"/>
</dbReference>
<dbReference type="RefSeq" id="WP_011235366.1">
    <property type="nucleotide sequence ID" value="NC_006512.1"/>
</dbReference>
<dbReference type="SMR" id="Q5QVE8"/>
<dbReference type="STRING" id="283942.IL2138"/>
<dbReference type="GeneID" id="41337327"/>
<dbReference type="KEGG" id="ilo:IL2138"/>
<dbReference type="eggNOG" id="COG1154">
    <property type="taxonomic scope" value="Bacteria"/>
</dbReference>
<dbReference type="HOGENOM" id="CLU_009227_1_4_6"/>
<dbReference type="OrthoDB" id="9803371at2"/>
<dbReference type="UniPathway" id="UPA00064">
    <property type="reaction ID" value="UER00091"/>
</dbReference>
<dbReference type="Proteomes" id="UP000001171">
    <property type="component" value="Chromosome"/>
</dbReference>
<dbReference type="GO" id="GO:0005829">
    <property type="term" value="C:cytosol"/>
    <property type="evidence" value="ECO:0007669"/>
    <property type="project" value="TreeGrafter"/>
</dbReference>
<dbReference type="GO" id="GO:0008661">
    <property type="term" value="F:1-deoxy-D-xylulose-5-phosphate synthase activity"/>
    <property type="evidence" value="ECO:0007669"/>
    <property type="project" value="UniProtKB-UniRule"/>
</dbReference>
<dbReference type="GO" id="GO:0000287">
    <property type="term" value="F:magnesium ion binding"/>
    <property type="evidence" value="ECO:0007669"/>
    <property type="project" value="UniProtKB-UniRule"/>
</dbReference>
<dbReference type="GO" id="GO:0030976">
    <property type="term" value="F:thiamine pyrophosphate binding"/>
    <property type="evidence" value="ECO:0007669"/>
    <property type="project" value="UniProtKB-UniRule"/>
</dbReference>
<dbReference type="GO" id="GO:0052865">
    <property type="term" value="P:1-deoxy-D-xylulose 5-phosphate biosynthetic process"/>
    <property type="evidence" value="ECO:0007669"/>
    <property type="project" value="UniProtKB-UniPathway"/>
</dbReference>
<dbReference type="GO" id="GO:0019288">
    <property type="term" value="P:isopentenyl diphosphate biosynthetic process, methylerythritol 4-phosphate pathway"/>
    <property type="evidence" value="ECO:0007669"/>
    <property type="project" value="TreeGrafter"/>
</dbReference>
<dbReference type="GO" id="GO:0016114">
    <property type="term" value="P:terpenoid biosynthetic process"/>
    <property type="evidence" value="ECO:0007669"/>
    <property type="project" value="UniProtKB-UniRule"/>
</dbReference>
<dbReference type="GO" id="GO:0009228">
    <property type="term" value="P:thiamine biosynthetic process"/>
    <property type="evidence" value="ECO:0007669"/>
    <property type="project" value="UniProtKB-UniRule"/>
</dbReference>
<dbReference type="CDD" id="cd02007">
    <property type="entry name" value="TPP_DXS"/>
    <property type="match status" value="1"/>
</dbReference>
<dbReference type="CDD" id="cd07033">
    <property type="entry name" value="TPP_PYR_DXS_TK_like"/>
    <property type="match status" value="1"/>
</dbReference>
<dbReference type="FunFam" id="3.40.50.920:FF:000002">
    <property type="entry name" value="1-deoxy-D-xylulose-5-phosphate synthase"/>
    <property type="match status" value="1"/>
</dbReference>
<dbReference type="FunFam" id="3.40.50.970:FF:000005">
    <property type="entry name" value="1-deoxy-D-xylulose-5-phosphate synthase"/>
    <property type="match status" value="1"/>
</dbReference>
<dbReference type="Gene3D" id="3.40.50.920">
    <property type="match status" value="1"/>
</dbReference>
<dbReference type="Gene3D" id="3.40.50.970">
    <property type="match status" value="2"/>
</dbReference>
<dbReference type="HAMAP" id="MF_00315">
    <property type="entry name" value="DXP_synth"/>
    <property type="match status" value="1"/>
</dbReference>
<dbReference type="InterPro" id="IPR005477">
    <property type="entry name" value="Dxylulose-5-P_synthase"/>
</dbReference>
<dbReference type="InterPro" id="IPR029061">
    <property type="entry name" value="THDP-binding"/>
</dbReference>
<dbReference type="InterPro" id="IPR009014">
    <property type="entry name" value="Transketo_C/PFOR_II"/>
</dbReference>
<dbReference type="InterPro" id="IPR005475">
    <property type="entry name" value="Transketolase-like_Pyr-bd"/>
</dbReference>
<dbReference type="InterPro" id="IPR020826">
    <property type="entry name" value="Transketolase_BS"/>
</dbReference>
<dbReference type="InterPro" id="IPR033248">
    <property type="entry name" value="Transketolase_C"/>
</dbReference>
<dbReference type="InterPro" id="IPR049557">
    <property type="entry name" value="Transketolase_CS"/>
</dbReference>
<dbReference type="NCBIfam" id="TIGR00204">
    <property type="entry name" value="dxs"/>
    <property type="match status" value="1"/>
</dbReference>
<dbReference type="NCBIfam" id="NF003933">
    <property type="entry name" value="PRK05444.2-2"/>
    <property type="match status" value="1"/>
</dbReference>
<dbReference type="PANTHER" id="PTHR43322">
    <property type="entry name" value="1-D-DEOXYXYLULOSE 5-PHOSPHATE SYNTHASE-RELATED"/>
    <property type="match status" value="1"/>
</dbReference>
<dbReference type="PANTHER" id="PTHR43322:SF5">
    <property type="entry name" value="1-DEOXY-D-XYLULOSE-5-PHOSPHATE SYNTHASE, CHLOROPLASTIC"/>
    <property type="match status" value="1"/>
</dbReference>
<dbReference type="Pfam" id="PF13292">
    <property type="entry name" value="DXP_synthase_N"/>
    <property type="match status" value="1"/>
</dbReference>
<dbReference type="Pfam" id="PF02779">
    <property type="entry name" value="Transket_pyr"/>
    <property type="match status" value="1"/>
</dbReference>
<dbReference type="Pfam" id="PF02780">
    <property type="entry name" value="Transketolase_C"/>
    <property type="match status" value="1"/>
</dbReference>
<dbReference type="SMART" id="SM00861">
    <property type="entry name" value="Transket_pyr"/>
    <property type="match status" value="1"/>
</dbReference>
<dbReference type="SUPFAM" id="SSF52518">
    <property type="entry name" value="Thiamin diphosphate-binding fold (THDP-binding)"/>
    <property type="match status" value="2"/>
</dbReference>
<dbReference type="SUPFAM" id="SSF52922">
    <property type="entry name" value="TK C-terminal domain-like"/>
    <property type="match status" value="1"/>
</dbReference>
<dbReference type="PROSITE" id="PS00801">
    <property type="entry name" value="TRANSKETOLASE_1"/>
    <property type="match status" value="1"/>
</dbReference>
<dbReference type="PROSITE" id="PS00802">
    <property type="entry name" value="TRANSKETOLASE_2"/>
    <property type="match status" value="1"/>
</dbReference>
<organism>
    <name type="scientific">Idiomarina loihiensis (strain ATCC BAA-735 / DSM 15497 / L2-TR)</name>
    <dbReference type="NCBI Taxonomy" id="283942"/>
    <lineage>
        <taxon>Bacteria</taxon>
        <taxon>Pseudomonadati</taxon>
        <taxon>Pseudomonadota</taxon>
        <taxon>Gammaproteobacteria</taxon>
        <taxon>Alteromonadales</taxon>
        <taxon>Idiomarinaceae</taxon>
        <taxon>Idiomarina</taxon>
    </lineage>
</organism>
<gene>
    <name evidence="1" type="primary">dxs</name>
    <name type="ordered locus">IL2138</name>
</gene>
<comment type="function">
    <text evidence="1">Catalyzes the acyloin condensation reaction between C atoms 2 and 3 of pyruvate and glyceraldehyde 3-phosphate to yield 1-deoxy-D-xylulose-5-phosphate (DXP).</text>
</comment>
<comment type="catalytic activity">
    <reaction evidence="1">
        <text>D-glyceraldehyde 3-phosphate + pyruvate + H(+) = 1-deoxy-D-xylulose 5-phosphate + CO2</text>
        <dbReference type="Rhea" id="RHEA:12605"/>
        <dbReference type="ChEBI" id="CHEBI:15361"/>
        <dbReference type="ChEBI" id="CHEBI:15378"/>
        <dbReference type="ChEBI" id="CHEBI:16526"/>
        <dbReference type="ChEBI" id="CHEBI:57792"/>
        <dbReference type="ChEBI" id="CHEBI:59776"/>
        <dbReference type="EC" id="2.2.1.7"/>
    </reaction>
</comment>
<comment type="cofactor">
    <cofactor evidence="1">
        <name>Mg(2+)</name>
        <dbReference type="ChEBI" id="CHEBI:18420"/>
    </cofactor>
    <text evidence="1">Binds 1 Mg(2+) ion per subunit.</text>
</comment>
<comment type="cofactor">
    <cofactor evidence="1">
        <name>thiamine diphosphate</name>
        <dbReference type="ChEBI" id="CHEBI:58937"/>
    </cofactor>
    <text evidence="1">Binds 1 thiamine pyrophosphate per subunit.</text>
</comment>
<comment type="pathway">
    <text evidence="1">Metabolic intermediate biosynthesis; 1-deoxy-D-xylulose 5-phosphate biosynthesis; 1-deoxy-D-xylulose 5-phosphate from D-glyceraldehyde 3-phosphate and pyruvate: step 1/1.</text>
</comment>
<comment type="subunit">
    <text evidence="1">Homodimer.</text>
</comment>
<comment type="similarity">
    <text evidence="1">Belongs to the transketolase family. DXPS subfamily.</text>
</comment>
<keyword id="KW-0414">Isoprene biosynthesis</keyword>
<keyword id="KW-0460">Magnesium</keyword>
<keyword id="KW-0479">Metal-binding</keyword>
<keyword id="KW-1185">Reference proteome</keyword>
<keyword id="KW-0784">Thiamine biosynthesis</keyword>
<keyword id="KW-0786">Thiamine pyrophosphate</keyword>
<keyword id="KW-0808">Transferase</keyword>
<evidence type="ECO:0000255" key="1">
    <source>
        <dbReference type="HAMAP-Rule" id="MF_00315"/>
    </source>
</evidence>
<feature type="chain" id="PRO_0000256430" description="1-deoxy-D-xylulose-5-phosphate synthase">
    <location>
        <begin position="1"/>
        <end position="618"/>
    </location>
</feature>
<feature type="binding site" evidence="1">
    <location>
        <position position="77"/>
    </location>
    <ligand>
        <name>thiamine diphosphate</name>
        <dbReference type="ChEBI" id="CHEBI:58937"/>
    </ligand>
</feature>
<feature type="binding site" evidence="1">
    <location>
        <begin position="118"/>
        <end position="120"/>
    </location>
    <ligand>
        <name>thiamine diphosphate</name>
        <dbReference type="ChEBI" id="CHEBI:58937"/>
    </ligand>
</feature>
<feature type="binding site" evidence="1">
    <location>
        <position position="149"/>
    </location>
    <ligand>
        <name>Mg(2+)</name>
        <dbReference type="ChEBI" id="CHEBI:18420"/>
    </ligand>
</feature>
<feature type="binding site" evidence="1">
    <location>
        <begin position="150"/>
        <end position="151"/>
    </location>
    <ligand>
        <name>thiamine diphosphate</name>
        <dbReference type="ChEBI" id="CHEBI:58937"/>
    </ligand>
</feature>
<feature type="binding site" evidence="1">
    <location>
        <position position="178"/>
    </location>
    <ligand>
        <name>Mg(2+)</name>
        <dbReference type="ChEBI" id="CHEBI:18420"/>
    </ligand>
</feature>
<feature type="binding site" evidence="1">
    <location>
        <position position="178"/>
    </location>
    <ligand>
        <name>thiamine diphosphate</name>
        <dbReference type="ChEBI" id="CHEBI:58937"/>
    </ligand>
</feature>
<feature type="binding site" evidence="1">
    <location>
        <position position="285"/>
    </location>
    <ligand>
        <name>thiamine diphosphate</name>
        <dbReference type="ChEBI" id="CHEBI:58937"/>
    </ligand>
</feature>
<feature type="binding site" evidence="1">
    <location>
        <position position="367"/>
    </location>
    <ligand>
        <name>thiamine diphosphate</name>
        <dbReference type="ChEBI" id="CHEBI:58937"/>
    </ligand>
</feature>
<proteinExistence type="inferred from homology"/>
<name>DXS_IDILO</name>
<sequence length="618" mass="67382">MTQQYPLLDKINSPADLRRLPRTQLPELCAEIRQFLLTSVSQSSGHLASGLGTVELTVALHYVYHTPEDKLVWDVGHQAYPHKILTGRKQRLHSIRQKDGLHPFPWREESEYDVLSVGHSSTSISAALGMAVAAQRQSLRQKVVSIIGDGAMTAGMAFEAMNHAGDIKPDMLVVLNDNDMSISENVGALNHHFARLLSGRFYTSLREGSKKLLSPLPHIRHFASRAEEHMKGMMAPGTIFEELGFNYIGPIDGHDVDTLVDTLSNMRSLGGPQLLHIVTQKGKGYRPAERDPIGYHGVPKFDPKESSLPEKAPGIPSYSEIFGQWLCDTASNDKSLMAITPAMREGSGMVTFSQQYPQQYFDVAIAEQHSVTYAAGLAISGLKPVVAIYSTFLQRGYDQLIHDVALQNLDVLFAIDRAGIVGADGPTHQGAFDLSYLRCIPNMVVMAPSNEQECLDMLTTGYQYKGPAAVRYPRGAGVGLELRKGKVIDIGKAQTLTEGQNIAFLNFGTLLPEVEAAAAKFNATVVDMRFIKPLDTACLDQLMTTHSVLVTVEENVIAGGAGGAVSEYVAQHKASPQVLTIGLPDEFIKHGSQGEVRAELGLDAAGIERQVNDFIKKS</sequence>
<accession>Q5QVE8</accession>